<gene>
    <name evidence="3" type="primary">Erg28</name>
    <name type="synonym">Orf11</name>
</gene>
<accession>Q9ERY9</accession>
<accession>Q3U8G1</accession>
<feature type="chain" id="PRO_0000193904" description="Ergosterol biosynthetic protein 28 homolog">
    <location>
        <begin position="1"/>
        <end position="140"/>
    </location>
</feature>
<feature type="transmembrane region" description="Helical" evidence="1">
    <location>
        <begin position="4"/>
        <end position="24"/>
    </location>
</feature>
<feature type="transmembrane region" description="Helical" evidence="1">
    <location>
        <begin position="52"/>
        <end position="72"/>
    </location>
</feature>
<feature type="transmembrane region" description="Helical" evidence="1">
    <location>
        <begin position="79"/>
        <end position="99"/>
    </location>
</feature>
<feature type="transmembrane region" description="Helical" evidence="1">
    <location>
        <begin position="105"/>
        <end position="125"/>
    </location>
</feature>
<comment type="subcellular location">
    <subcellularLocation>
        <location evidence="2">Endoplasmic reticulum membrane</location>
        <topology evidence="2">Multi-pass membrane protein</topology>
    </subcellularLocation>
</comment>
<comment type="similarity">
    <text evidence="2">Belongs to the ERG28 family.</text>
</comment>
<proteinExistence type="evidence at transcript level"/>
<organism>
    <name type="scientific">Mus musculus</name>
    <name type="common">Mouse</name>
    <dbReference type="NCBI Taxonomy" id="10090"/>
    <lineage>
        <taxon>Eukaryota</taxon>
        <taxon>Metazoa</taxon>
        <taxon>Chordata</taxon>
        <taxon>Craniata</taxon>
        <taxon>Vertebrata</taxon>
        <taxon>Euteleostomi</taxon>
        <taxon>Mammalia</taxon>
        <taxon>Eutheria</taxon>
        <taxon>Euarchontoglires</taxon>
        <taxon>Glires</taxon>
        <taxon>Rodentia</taxon>
        <taxon>Myomorpha</taxon>
        <taxon>Muroidea</taxon>
        <taxon>Muridae</taxon>
        <taxon>Murinae</taxon>
        <taxon>Mus</taxon>
        <taxon>Mus</taxon>
    </lineage>
</organism>
<reference key="1">
    <citation type="journal article" date="2000" name="Mamm. Genome">
        <title>The genomic structure of c14orf1 is conserved across eukarya.</title>
        <authorList>
            <person name="Ottolenghi C."/>
            <person name="Daizadeh I."/>
            <person name="Ju A."/>
            <person name="Kossida S."/>
            <person name="Renault G."/>
            <person name="Jacquet M."/>
            <person name="Fellous A."/>
            <person name="Gilbert W."/>
            <person name="Veitia R.A."/>
        </authorList>
    </citation>
    <scope>NUCLEOTIDE SEQUENCE [MRNA]</scope>
</reference>
<reference key="2">
    <citation type="journal article" date="2005" name="Science">
        <title>The transcriptional landscape of the mammalian genome.</title>
        <authorList>
            <person name="Carninci P."/>
            <person name="Kasukawa T."/>
            <person name="Katayama S."/>
            <person name="Gough J."/>
            <person name="Frith M.C."/>
            <person name="Maeda N."/>
            <person name="Oyama R."/>
            <person name="Ravasi T."/>
            <person name="Lenhard B."/>
            <person name="Wells C."/>
            <person name="Kodzius R."/>
            <person name="Shimokawa K."/>
            <person name="Bajic V.B."/>
            <person name="Brenner S.E."/>
            <person name="Batalov S."/>
            <person name="Forrest A.R."/>
            <person name="Zavolan M."/>
            <person name="Davis M.J."/>
            <person name="Wilming L.G."/>
            <person name="Aidinis V."/>
            <person name="Allen J.E."/>
            <person name="Ambesi-Impiombato A."/>
            <person name="Apweiler R."/>
            <person name="Aturaliya R.N."/>
            <person name="Bailey T.L."/>
            <person name="Bansal M."/>
            <person name="Baxter L."/>
            <person name="Beisel K.W."/>
            <person name="Bersano T."/>
            <person name="Bono H."/>
            <person name="Chalk A.M."/>
            <person name="Chiu K.P."/>
            <person name="Choudhary V."/>
            <person name="Christoffels A."/>
            <person name="Clutterbuck D.R."/>
            <person name="Crowe M.L."/>
            <person name="Dalla E."/>
            <person name="Dalrymple B.P."/>
            <person name="de Bono B."/>
            <person name="Della Gatta G."/>
            <person name="di Bernardo D."/>
            <person name="Down T."/>
            <person name="Engstrom P."/>
            <person name="Fagiolini M."/>
            <person name="Faulkner G."/>
            <person name="Fletcher C.F."/>
            <person name="Fukushima T."/>
            <person name="Furuno M."/>
            <person name="Futaki S."/>
            <person name="Gariboldi M."/>
            <person name="Georgii-Hemming P."/>
            <person name="Gingeras T.R."/>
            <person name="Gojobori T."/>
            <person name="Green R.E."/>
            <person name="Gustincich S."/>
            <person name="Harbers M."/>
            <person name="Hayashi Y."/>
            <person name="Hensch T.K."/>
            <person name="Hirokawa N."/>
            <person name="Hill D."/>
            <person name="Huminiecki L."/>
            <person name="Iacono M."/>
            <person name="Ikeo K."/>
            <person name="Iwama A."/>
            <person name="Ishikawa T."/>
            <person name="Jakt M."/>
            <person name="Kanapin A."/>
            <person name="Katoh M."/>
            <person name="Kawasawa Y."/>
            <person name="Kelso J."/>
            <person name="Kitamura H."/>
            <person name="Kitano H."/>
            <person name="Kollias G."/>
            <person name="Krishnan S.P."/>
            <person name="Kruger A."/>
            <person name="Kummerfeld S.K."/>
            <person name="Kurochkin I.V."/>
            <person name="Lareau L.F."/>
            <person name="Lazarevic D."/>
            <person name="Lipovich L."/>
            <person name="Liu J."/>
            <person name="Liuni S."/>
            <person name="McWilliam S."/>
            <person name="Madan Babu M."/>
            <person name="Madera M."/>
            <person name="Marchionni L."/>
            <person name="Matsuda H."/>
            <person name="Matsuzawa S."/>
            <person name="Miki H."/>
            <person name="Mignone F."/>
            <person name="Miyake S."/>
            <person name="Morris K."/>
            <person name="Mottagui-Tabar S."/>
            <person name="Mulder N."/>
            <person name="Nakano N."/>
            <person name="Nakauchi H."/>
            <person name="Ng P."/>
            <person name="Nilsson R."/>
            <person name="Nishiguchi S."/>
            <person name="Nishikawa S."/>
            <person name="Nori F."/>
            <person name="Ohara O."/>
            <person name="Okazaki Y."/>
            <person name="Orlando V."/>
            <person name="Pang K.C."/>
            <person name="Pavan W.J."/>
            <person name="Pavesi G."/>
            <person name="Pesole G."/>
            <person name="Petrovsky N."/>
            <person name="Piazza S."/>
            <person name="Reed J."/>
            <person name="Reid J.F."/>
            <person name="Ring B.Z."/>
            <person name="Ringwald M."/>
            <person name="Rost B."/>
            <person name="Ruan Y."/>
            <person name="Salzberg S.L."/>
            <person name="Sandelin A."/>
            <person name="Schneider C."/>
            <person name="Schoenbach C."/>
            <person name="Sekiguchi K."/>
            <person name="Semple C.A."/>
            <person name="Seno S."/>
            <person name="Sessa L."/>
            <person name="Sheng Y."/>
            <person name="Shibata Y."/>
            <person name="Shimada H."/>
            <person name="Shimada K."/>
            <person name="Silva D."/>
            <person name="Sinclair B."/>
            <person name="Sperling S."/>
            <person name="Stupka E."/>
            <person name="Sugiura K."/>
            <person name="Sultana R."/>
            <person name="Takenaka Y."/>
            <person name="Taki K."/>
            <person name="Tammoja K."/>
            <person name="Tan S.L."/>
            <person name="Tang S."/>
            <person name="Taylor M.S."/>
            <person name="Tegner J."/>
            <person name="Teichmann S.A."/>
            <person name="Ueda H.R."/>
            <person name="van Nimwegen E."/>
            <person name="Verardo R."/>
            <person name="Wei C.L."/>
            <person name="Yagi K."/>
            <person name="Yamanishi H."/>
            <person name="Zabarovsky E."/>
            <person name="Zhu S."/>
            <person name="Zimmer A."/>
            <person name="Hide W."/>
            <person name="Bult C."/>
            <person name="Grimmond S.M."/>
            <person name="Teasdale R.D."/>
            <person name="Liu E.T."/>
            <person name="Brusic V."/>
            <person name="Quackenbush J."/>
            <person name="Wahlestedt C."/>
            <person name="Mattick J.S."/>
            <person name="Hume D.A."/>
            <person name="Kai C."/>
            <person name="Sasaki D."/>
            <person name="Tomaru Y."/>
            <person name="Fukuda S."/>
            <person name="Kanamori-Katayama M."/>
            <person name="Suzuki M."/>
            <person name="Aoki J."/>
            <person name="Arakawa T."/>
            <person name="Iida J."/>
            <person name="Imamura K."/>
            <person name="Itoh M."/>
            <person name="Kato T."/>
            <person name="Kawaji H."/>
            <person name="Kawagashira N."/>
            <person name="Kawashima T."/>
            <person name="Kojima M."/>
            <person name="Kondo S."/>
            <person name="Konno H."/>
            <person name="Nakano K."/>
            <person name="Ninomiya N."/>
            <person name="Nishio T."/>
            <person name="Okada M."/>
            <person name="Plessy C."/>
            <person name="Shibata K."/>
            <person name="Shiraki T."/>
            <person name="Suzuki S."/>
            <person name="Tagami M."/>
            <person name="Waki K."/>
            <person name="Watahiki A."/>
            <person name="Okamura-Oho Y."/>
            <person name="Suzuki H."/>
            <person name="Kawai J."/>
            <person name="Hayashizaki Y."/>
        </authorList>
    </citation>
    <scope>NUCLEOTIDE SEQUENCE [LARGE SCALE MRNA]</scope>
    <source>
        <strain>C57BL/6J</strain>
        <tissue>Bone marrow</tissue>
        <tissue>Embryo</tissue>
    </source>
</reference>
<reference key="3">
    <citation type="journal article" date="2004" name="Genome Res.">
        <title>The status, quality, and expansion of the NIH full-length cDNA project: the Mammalian Gene Collection (MGC).</title>
        <authorList>
            <consortium name="The MGC Project Team"/>
        </authorList>
    </citation>
    <scope>NUCLEOTIDE SEQUENCE [LARGE SCALE MRNA]</scope>
</reference>
<keyword id="KW-0256">Endoplasmic reticulum</keyword>
<keyword id="KW-0444">Lipid biosynthesis</keyword>
<keyword id="KW-0443">Lipid metabolism</keyword>
<keyword id="KW-0472">Membrane</keyword>
<keyword id="KW-1185">Reference proteome</keyword>
<keyword id="KW-0752">Steroid biosynthesis</keyword>
<keyword id="KW-0753">Steroid metabolism</keyword>
<keyword id="KW-0756">Sterol biosynthesis</keyword>
<keyword id="KW-1207">Sterol metabolism</keyword>
<keyword id="KW-0812">Transmembrane</keyword>
<keyword id="KW-1133">Transmembrane helix</keyword>
<protein>
    <recommendedName>
        <fullName>Ergosterol biosynthetic protein 28 homolog</fullName>
    </recommendedName>
</protein>
<dbReference type="EMBL" id="AF270646">
    <property type="protein sequence ID" value="AAG17664.1"/>
    <property type="molecule type" value="mRNA"/>
</dbReference>
<dbReference type="EMBL" id="AK004480">
    <property type="protein sequence ID" value="BAB23325.1"/>
    <property type="molecule type" value="mRNA"/>
</dbReference>
<dbReference type="EMBL" id="AK152230">
    <property type="protein sequence ID" value="BAE31057.1"/>
    <property type="molecule type" value="mRNA"/>
</dbReference>
<dbReference type="EMBL" id="BC004591">
    <property type="protein sequence ID" value="AAH04591.1"/>
    <property type="molecule type" value="mRNA"/>
</dbReference>
<dbReference type="CCDS" id="CCDS26063.1"/>
<dbReference type="RefSeq" id="NP_001347380.1">
    <property type="nucleotide sequence ID" value="NM_001360451.1"/>
</dbReference>
<dbReference type="RefSeq" id="NP_067421.1">
    <property type="nucleotide sequence ID" value="NM_021446.3"/>
</dbReference>
<dbReference type="RefSeq" id="XP_006516180.1">
    <property type="nucleotide sequence ID" value="XM_006516117.2"/>
</dbReference>
<dbReference type="BioGRID" id="208424">
    <property type="interactions" value="2"/>
</dbReference>
<dbReference type="FunCoup" id="Q9ERY9">
    <property type="interactions" value="800"/>
</dbReference>
<dbReference type="STRING" id="10090.ENSMUSP00000021676"/>
<dbReference type="PhosphoSitePlus" id="Q9ERY9"/>
<dbReference type="SwissPalm" id="Q9ERY9"/>
<dbReference type="jPOST" id="Q9ERY9"/>
<dbReference type="PaxDb" id="10090-ENSMUSP00000021676"/>
<dbReference type="PeptideAtlas" id="Q9ERY9"/>
<dbReference type="ProteomicsDB" id="275770"/>
<dbReference type="Pumba" id="Q9ERY9"/>
<dbReference type="Antibodypedia" id="51644">
    <property type="antibodies" value="62 antibodies from 14 providers"/>
</dbReference>
<dbReference type="DNASU" id="58520"/>
<dbReference type="Ensembl" id="ENSMUST00000021676.12">
    <property type="protein sequence ID" value="ENSMUSP00000021676.6"/>
    <property type="gene ID" value="ENSMUSG00000021252.12"/>
</dbReference>
<dbReference type="GeneID" id="58520"/>
<dbReference type="KEGG" id="mmu:58520"/>
<dbReference type="UCSC" id="uc007ohf.1">
    <property type="organism name" value="mouse"/>
</dbReference>
<dbReference type="AGR" id="MGI:1915571"/>
<dbReference type="CTD" id="11161"/>
<dbReference type="MGI" id="MGI:1915571">
    <property type="gene designation" value="Erg28"/>
</dbReference>
<dbReference type="VEuPathDB" id="HostDB:ENSMUSG00000021252"/>
<dbReference type="eggNOG" id="KOG3455">
    <property type="taxonomic scope" value="Eukaryota"/>
</dbReference>
<dbReference type="GeneTree" id="ENSGT00390000010925"/>
<dbReference type="HOGENOM" id="CLU_114589_2_0_1"/>
<dbReference type="InParanoid" id="Q9ERY9"/>
<dbReference type="OMA" id="NIAIWTY"/>
<dbReference type="OrthoDB" id="6485510at2759"/>
<dbReference type="PhylomeDB" id="Q9ERY9"/>
<dbReference type="TreeFam" id="TF300191"/>
<dbReference type="BioGRID-ORCS" id="58520">
    <property type="hits" value="1 hit in 77 CRISPR screens"/>
</dbReference>
<dbReference type="ChiTaRS" id="Erg28">
    <property type="organism name" value="mouse"/>
</dbReference>
<dbReference type="PRO" id="PR:Q9ERY9"/>
<dbReference type="Proteomes" id="UP000000589">
    <property type="component" value="Chromosome 12"/>
</dbReference>
<dbReference type="RNAct" id="Q9ERY9">
    <property type="molecule type" value="protein"/>
</dbReference>
<dbReference type="Bgee" id="ENSMUSG00000021252">
    <property type="expression patterns" value="Expressed in undifferentiated genital tubercle and 237 other cell types or tissues"/>
</dbReference>
<dbReference type="ExpressionAtlas" id="Q9ERY9">
    <property type="expression patterns" value="baseline and differential"/>
</dbReference>
<dbReference type="GO" id="GO:0005789">
    <property type="term" value="C:endoplasmic reticulum membrane"/>
    <property type="evidence" value="ECO:0007669"/>
    <property type="project" value="UniProtKB-SubCell"/>
</dbReference>
<dbReference type="GO" id="GO:0030133">
    <property type="term" value="C:transport vesicle"/>
    <property type="evidence" value="ECO:0007669"/>
    <property type="project" value="Ensembl"/>
</dbReference>
<dbReference type="GO" id="GO:0042802">
    <property type="term" value="F:identical protein binding"/>
    <property type="evidence" value="ECO:0007669"/>
    <property type="project" value="Ensembl"/>
</dbReference>
<dbReference type="GO" id="GO:0016126">
    <property type="term" value="P:sterol biosynthetic process"/>
    <property type="evidence" value="ECO:0007669"/>
    <property type="project" value="UniProtKB-KW"/>
</dbReference>
<dbReference type="InterPro" id="IPR005352">
    <property type="entry name" value="Erg28"/>
</dbReference>
<dbReference type="PANTHER" id="PTHR15451:SF19">
    <property type="entry name" value="ERGOSTEROL BIOSYNTHETIC PROTEIN 28 HOMOLOG"/>
    <property type="match status" value="1"/>
</dbReference>
<dbReference type="PANTHER" id="PTHR15451">
    <property type="entry name" value="ERGOSTEROL BIOSYNTHETIC PROTEIN 28-RELATED"/>
    <property type="match status" value="1"/>
</dbReference>
<dbReference type="Pfam" id="PF03694">
    <property type="entry name" value="Erg28"/>
    <property type="match status" value="1"/>
</dbReference>
<evidence type="ECO:0000255" key="1"/>
<evidence type="ECO:0000305" key="2"/>
<evidence type="ECO:0000312" key="3">
    <source>
        <dbReference type="MGI" id="MGI:1915571"/>
    </source>
</evidence>
<name>ERG28_MOUSE</name>
<sequence length="140" mass="15806">MSRFLNVLRSWLVMVSIIAMGNTLQSFRDHTFLYEKLYTGKPNLVNGLQARTFGIWTLLSSVIRCLCAIDIHNKTLYHITLWTFLLALGHFLSELFVFGTAAPTVGVLAPLMVASFSILGMLVGLRYLEAEPVSRQKKRN</sequence>